<organismHost>
    <name type="scientific">Orgyia pseudotsugata</name>
    <name type="common">Douglas-fir tussock moth</name>
    <dbReference type="NCBI Taxonomy" id="33414"/>
</organismHost>
<feature type="chain" id="PRO_0000133019" description="Uncharacterized 9.4 kDa protein">
    <location>
        <begin position="1"/>
        <end position="84"/>
    </location>
</feature>
<organism>
    <name type="scientific">Orgyia pseudotsugata multicapsid polyhedrosis virus</name>
    <name type="common">OpMNPV</name>
    <dbReference type="NCBI Taxonomy" id="262177"/>
    <lineage>
        <taxon>Viruses</taxon>
        <taxon>Viruses incertae sedis</taxon>
        <taxon>Naldaviricetes</taxon>
        <taxon>Lefavirales</taxon>
        <taxon>Baculoviridae</taxon>
        <taxon>Alphabaculovirus</taxon>
        <taxon>Alphabaculovirus orpseudotsugatae</taxon>
    </lineage>
</organism>
<accession>O10329</accession>
<keyword id="KW-1185">Reference proteome</keyword>
<reference key="1">
    <citation type="journal article" date="1997" name="Virology">
        <title>The sequence of the Orgyia pseudotsugata multinucleocapsid nuclear polyhedrosis virus genome.</title>
        <authorList>
            <person name="Ahrens C.H."/>
            <person name="Russell R.R."/>
            <person name="Funk C.J."/>
            <person name="Evans J."/>
            <person name="Harwood S."/>
            <person name="Rohrmann G.F."/>
        </authorList>
    </citation>
    <scope>NUCLEOTIDE SEQUENCE [LARGE SCALE GENOMIC DNA]</scope>
</reference>
<sequence length="84" mass="9352">MHLYLLLGALAVFSLVYDKKENGIVFYFLILVLVFVLISPAFISKNTESAANDLPSHKAKSVRKKLEIEQALDAILNKNTSSLD</sequence>
<proteinExistence type="predicted"/>
<dbReference type="EMBL" id="U75930">
    <property type="protein sequence ID" value="AAC59078.1"/>
    <property type="molecule type" value="Genomic_DNA"/>
</dbReference>
<dbReference type="RefSeq" id="NP_046235.1">
    <property type="nucleotide sequence ID" value="NC_001875.2"/>
</dbReference>
<dbReference type="SMR" id="O10329"/>
<dbReference type="KEGG" id="vg:911968"/>
<dbReference type="OrthoDB" id="23474at10239"/>
<dbReference type="Proteomes" id="UP000009248">
    <property type="component" value="Genome"/>
</dbReference>
<dbReference type="InterPro" id="IPR008561">
    <property type="entry name" value="Ac76_baculovir"/>
</dbReference>
<dbReference type="Pfam" id="PF05814">
    <property type="entry name" value="Ac76"/>
    <property type="match status" value="1"/>
</dbReference>
<name>Y076_NPVOP</name>
<protein>
    <recommendedName>
        <fullName>Uncharacterized 9.4 kDa protein</fullName>
    </recommendedName>
</protein>
<gene>
    <name type="ORF">ORF79</name>
</gene>